<sequence>MSLYGMMRTGVSGMNAQANRLSTVADNIANASTVGYKRAETQFSSLVLPSTAGQYNSGSVLTDVRYGISDQGGIRSTSSTTDLAIDGNGYFVVQGPGGSTYLTRAGSFVPDKNGDLVNSAGYYLLGAGADEAAGGLTVAGLNIVNVNAAALPAEGSTAGDFTVNLPSTDQAPAAGGYNHKTSLISYNDKGEKITLDVYFTKTGADEWNVSVKNAADGVEIGTTVLNFDPTTGDLVSGGNVAVNLGAYGGQTLNLNLGGSTQRAGDYTISQAVINGQAPSSIKGVDVGNDGAVVAVYENGTQKVLYRIPLANVASPDRMTVVSGNIFLPSAESGDVRLGFPQGDGMGKIMSGTLEESNADIAQELTDMIEAQRSYTANSKVFQTGFELMDVLVNLKR</sequence>
<proteinExistence type="evidence at protein level"/>
<organism>
    <name type="scientific">Brucella melitensis biotype 1 (strain ATCC 23456 / CCUG 17765 / NCTC 10094 / 16M)</name>
    <dbReference type="NCBI Taxonomy" id="224914"/>
    <lineage>
        <taxon>Bacteria</taxon>
        <taxon>Pseudomonadati</taxon>
        <taxon>Pseudomonadota</taxon>
        <taxon>Alphaproteobacteria</taxon>
        <taxon>Hyphomicrobiales</taxon>
        <taxon>Brucellaceae</taxon>
        <taxon>Brucella/Ochrobactrum group</taxon>
        <taxon>Brucella</taxon>
    </lineage>
</organism>
<gene>
    <name type="primary">flgE</name>
    <name type="ordered locus">BMEII0159</name>
</gene>
<name>FLGE_BRUME</name>
<keyword id="KW-0975">Bacterial flagellum</keyword>
<protein>
    <recommendedName>
        <fullName>Flagellar hook protein FlgE</fullName>
    </recommendedName>
</protein>
<comment type="function">
    <text evidence="2">The flagellum is required to cause a persistent disease in a murine model of infection.</text>
</comment>
<comment type="subcellular location">
    <subcellularLocation>
        <location evidence="1">Bacterial flagellum basal body</location>
    </subcellularLocation>
</comment>
<comment type="induction">
    <text>Expressed at the onset of the exponential phase (after 4, 8 and 12 hours of culture) but not at later time points.</text>
</comment>
<comment type="disruption phenotype">
    <text evidence="2">A flgE mutant is attenuated in a murine model of infection. Four weeks after infection, the number of cfu per spleen from mice infected with the mutant is significantly lower than the number from mice infected with the wild-type.</text>
</comment>
<comment type="similarity">
    <text evidence="3">Belongs to the flagella basal body rod proteins family.</text>
</comment>
<comment type="caution">
    <text evidence="3">Despite the presence of a stop codon in position 243 in the fliF gene and in position 127 in the flhA gene, it has been shown that B.melitensis is able to express genes corresponding to the M ring, the hook and the filament of the flagellar apparatus in the early log phase of growth in 2YT broth. Under these conditions, a polar and sheathed flagellar structure is visible by transmission electron microscopy.</text>
</comment>
<reference key="1">
    <citation type="journal article" date="2002" name="Proc. Natl. Acad. Sci. U.S.A.">
        <title>The genome sequence of the facultative intracellular pathogen Brucella melitensis.</title>
        <authorList>
            <person name="DelVecchio V.G."/>
            <person name="Kapatral V."/>
            <person name="Redkar R.J."/>
            <person name="Patra G."/>
            <person name="Mujer C."/>
            <person name="Los T."/>
            <person name="Ivanova N."/>
            <person name="Anderson I."/>
            <person name="Bhattacharyya A."/>
            <person name="Lykidis A."/>
            <person name="Reznik G."/>
            <person name="Jablonski L."/>
            <person name="Larsen N."/>
            <person name="D'Souza M."/>
            <person name="Bernal A."/>
            <person name="Mazur M."/>
            <person name="Goltsman E."/>
            <person name="Selkov E."/>
            <person name="Elzer P.H."/>
            <person name="Hagius S."/>
            <person name="O'Callaghan D."/>
            <person name="Letesson J.-J."/>
            <person name="Haselkorn R."/>
            <person name="Kyrpides N.C."/>
            <person name="Overbeek R."/>
        </authorList>
    </citation>
    <scope>NUCLEOTIDE SEQUENCE [LARGE SCALE GENOMIC DNA]</scope>
    <source>
        <strain>ATCC 23456 / CCUG 17765 / NCTC 10094 / 16M</strain>
    </source>
</reference>
<reference key="2">
    <citation type="journal article" date="2005" name="Cell. Microbiol.">
        <title>The sheathed flagellum of Brucella melitensis is involved in persistence in a murine model of infection.</title>
        <authorList>
            <person name="Fretin D."/>
            <person name="Fauconnier A."/>
            <person name="Koehler S."/>
            <person name="Halling S."/>
            <person name="Leonard S."/>
            <person name="Nijskens C."/>
            <person name="Ferooz J."/>
            <person name="Lestrate P."/>
            <person name="Delrue R.-M."/>
            <person name="Danese I."/>
            <person name="Vandenhaute J."/>
            <person name="Tibor A."/>
            <person name="DeBolle X."/>
            <person name="Letesson J.-J."/>
        </authorList>
    </citation>
    <scope>FUNCTION IN INFECTION PERSISTENCE</scope>
    <scope>EXPRESSION</scope>
    <scope>DISRUPTION PHENOTYPE</scope>
    <source>
        <strain>ATCC 23456 / CCUG 17765 / NCTC 10094 / 16M</strain>
    </source>
</reference>
<dbReference type="EMBL" id="AE008918">
    <property type="protein sequence ID" value="AAL53400.1"/>
    <property type="molecule type" value="Genomic_DNA"/>
</dbReference>
<dbReference type="PIR" id="AE3529">
    <property type="entry name" value="AE3529"/>
</dbReference>
<dbReference type="RefSeq" id="WP_004680995.1">
    <property type="nucleotide sequence ID" value="NZ_GG703779.1"/>
</dbReference>
<dbReference type="SMR" id="Q8YDL6"/>
<dbReference type="GeneID" id="29595573"/>
<dbReference type="KEGG" id="bme:BMEII0159"/>
<dbReference type="KEGG" id="bmel:DK63_3086"/>
<dbReference type="PATRIC" id="fig|224914.52.peg.3230"/>
<dbReference type="eggNOG" id="COG1749">
    <property type="taxonomic scope" value="Bacteria"/>
</dbReference>
<dbReference type="PhylomeDB" id="Q8YDL6"/>
<dbReference type="PRO" id="PR:Q8YDL6"/>
<dbReference type="Proteomes" id="UP000000419">
    <property type="component" value="Chromosome II"/>
</dbReference>
<dbReference type="GO" id="GO:0009425">
    <property type="term" value="C:bacterial-type flagellum basal body"/>
    <property type="evidence" value="ECO:0007669"/>
    <property type="project" value="UniProtKB-SubCell"/>
</dbReference>
<dbReference type="GO" id="GO:0009424">
    <property type="term" value="C:bacterial-type flagellum hook"/>
    <property type="evidence" value="ECO:0007669"/>
    <property type="project" value="TreeGrafter"/>
</dbReference>
<dbReference type="GO" id="GO:0005829">
    <property type="term" value="C:cytosol"/>
    <property type="evidence" value="ECO:0007669"/>
    <property type="project" value="TreeGrafter"/>
</dbReference>
<dbReference type="GO" id="GO:0071978">
    <property type="term" value="P:bacterial-type flagellum-dependent swarming motility"/>
    <property type="evidence" value="ECO:0007669"/>
    <property type="project" value="TreeGrafter"/>
</dbReference>
<dbReference type="Gene3D" id="2.60.98.20">
    <property type="entry name" value="Flagellar hook protein FlgE"/>
    <property type="match status" value="1"/>
</dbReference>
<dbReference type="InterPro" id="IPR037058">
    <property type="entry name" value="Falgellar_hook_FlgE_sf"/>
</dbReference>
<dbReference type="InterPro" id="IPR001444">
    <property type="entry name" value="Flag_bb_rod_N"/>
</dbReference>
<dbReference type="InterPro" id="IPR019776">
    <property type="entry name" value="Flagellar_basal_body_rod_CS"/>
</dbReference>
<dbReference type="InterPro" id="IPR020013">
    <property type="entry name" value="Flagellar_FlgE/F/G"/>
</dbReference>
<dbReference type="InterPro" id="IPR010930">
    <property type="entry name" value="Flg_bb/hook_C_dom"/>
</dbReference>
<dbReference type="InterPro" id="IPR037925">
    <property type="entry name" value="FlgE/F/G-like"/>
</dbReference>
<dbReference type="InterPro" id="IPR011491">
    <property type="entry name" value="FlgE_D2"/>
</dbReference>
<dbReference type="InterPro" id="IPR053967">
    <property type="entry name" value="LlgE_F_G-like_D1"/>
</dbReference>
<dbReference type="NCBIfam" id="TIGR03506">
    <property type="entry name" value="FlgEFG_subfam"/>
    <property type="match status" value="1"/>
</dbReference>
<dbReference type="PANTHER" id="PTHR30435:SF1">
    <property type="entry name" value="FLAGELLAR HOOK PROTEIN FLGE"/>
    <property type="match status" value="1"/>
</dbReference>
<dbReference type="PANTHER" id="PTHR30435">
    <property type="entry name" value="FLAGELLAR PROTEIN"/>
    <property type="match status" value="1"/>
</dbReference>
<dbReference type="Pfam" id="PF00460">
    <property type="entry name" value="Flg_bb_rod"/>
    <property type="match status" value="1"/>
</dbReference>
<dbReference type="Pfam" id="PF06429">
    <property type="entry name" value="Flg_bbr_C"/>
    <property type="match status" value="1"/>
</dbReference>
<dbReference type="Pfam" id="PF07559">
    <property type="entry name" value="FlgE_D2"/>
    <property type="match status" value="1"/>
</dbReference>
<dbReference type="Pfam" id="PF22692">
    <property type="entry name" value="LlgE_F_G_D1"/>
    <property type="match status" value="1"/>
</dbReference>
<dbReference type="SUPFAM" id="SSF117143">
    <property type="entry name" value="Flagellar hook protein flgE"/>
    <property type="match status" value="1"/>
</dbReference>
<dbReference type="PROSITE" id="PS00588">
    <property type="entry name" value="FLAGELLA_BB_ROD"/>
    <property type="match status" value="1"/>
</dbReference>
<feature type="chain" id="PRO_0000180820" description="Flagellar hook protein FlgE">
    <location>
        <begin position="1"/>
        <end position="396"/>
    </location>
</feature>
<evidence type="ECO:0000250" key="1"/>
<evidence type="ECO:0000269" key="2">
    <source>
    </source>
</evidence>
<evidence type="ECO:0000305" key="3"/>
<accession>Q8YDL6</accession>